<protein>
    <recommendedName>
        <fullName evidence="7">Serine/threonine-protein kinase Nek9</fullName>
        <ecNumber evidence="1">2.7.11.1</ecNumber>
    </recommendedName>
    <alternativeName>
        <fullName evidence="1">Nercc1 kinase</fullName>
    </alternativeName>
    <alternativeName>
        <fullName evidence="6">Never in mitosis A-related kinase 9</fullName>
        <shortName evidence="6">NimA-related protein kinase 9</shortName>
    </alternativeName>
</protein>
<proteinExistence type="evidence at protein level"/>
<comment type="function">
    <text evidence="1">Pleiotropic regulator of mitotic progression, participating in the control of spindle dynamics and chromosome separation. Phosphorylates different histones, myelin basic protein, beta-casein, and BICD2. Phosphorylates histone H3 on serine and threonine residues and beta-casein on serine residues. Important for G1/S transition and S phase progression. Phosphorylates NEK6 and NEK7 and stimulates their activity by releasing the autoinhibitory functions of Tyr-108 and Tyr-97 respectively.</text>
</comment>
<comment type="catalytic activity">
    <reaction evidence="1">
        <text>L-seryl-[protein] + ATP = O-phospho-L-seryl-[protein] + ADP + H(+)</text>
        <dbReference type="Rhea" id="RHEA:17989"/>
        <dbReference type="Rhea" id="RHEA-COMP:9863"/>
        <dbReference type="Rhea" id="RHEA-COMP:11604"/>
        <dbReference type="ChEBI" id="CHEBI:15378"/>
        <dbReference type="ChEBI" id="CHEBI:29999"/>
        <dbReference type="ChEBI" id="CHEBI:30616"/>
        <dbReference type="ChEBI" id="CHEBI:83421"/>
        <dbReference type="ChEBI" id="CHEBI:456216"/>
        <dbReference type="EC" id="2.7.11.1"/>
    </reaction>
    <physiologicalReaction direction="left-to-right" evidence="1">
        <dbReference type="Rhea" id="RHEA:17990"/>
    </physiologicalReaction>
</comment>
<comment type="catalytic activity">
    <reaction evidence="1">
        <text>L-threonyl-[protein] + ATP = O-phospho-L-threonyl-[protein] + ADP + H(+)</text>
        <dbReference type="Rhea" id="RHEA:46608"/>
        <dbReference type="Rhea" id="RHEA-COMP:11060"/>
        <dbReference type="Rhea" id="RHEA-COMP:11605"/>
        <dbReference type="ChEBI" id="CHEBI:15378"/>
        <dbReference type="ChEBI" id="CHEBI:30013"/>
        <dbReference type="ChEBI" id="CHEBI:30616"/>
        <dbReference type="ChEBI" id="CHEBI:61977"/>
        <dbReference type="ChEBI" id="CHEBI:456216"/>
        <dbReference type="EC" id="2.7.11.1"/>
    </reaction>
    <physiologicalReaction direction="left-to-right" evidence="1">
        <dbReference type="Rhea" id="RHEA:46609"/>
    </physiologicalReaction>
</comment>
<comment type="cofactor">
    <cofactor evidence="1">
        <name>Mg(2+)</name>
        <dbReference type="ChEBI" id="CHEBI:18420"/>
    </cofactor>
</comment>
<comment type="activity regulation">
    <text evidence="1">Activated during mitosis by intramolecular autophosphorylation. Activity and autophosphorylation is activated by manganese &gt;&gt; magnesium ions. It is not cell-cycle regulated but activity is higher in G0-arrested cells.</text>
</comment>
<comment type="subunit">
    <text evidence="1">Homodimer; homodimerization is required to activate NEK7. Binds to Ran GTPase. Has a greater affinity for Ran-GDP over Ran-GTP. Interacts with SSRP1 and SUPT16H, the 2 subunits of the FACT complex. Interacts with DYNLL1; phosphorylation at Ser-949 strongly reduces DYNLL1 binding.</text>
</comment>
<comment type="subcellular location">
    <subcellularLocation>
        <location evidence="1">Cytoplasm</location>
    </subcellularLocation>
    <subcellularLocation>
        <location evidence="1">Nucleus</location>
    </subcellularLocation>
</comment>
<comment type="domain">
    <text evidence="1">Dimerizes through its coiled-coil domain.</text>
</comment>
<comment type="PTM">
    <text evidence="1">Autophosphorylated on serine and threonine residues. When complexed with FACT, exhibits markedly elevated phosphorylation on Thr-210. During mitosis, not phosphorylated on Thr-210. Phosphorylated by CDK1 in vitro.</text>
</comment>
<comment type="similarity">
    <text evidence="7">Belongs to the protein kinase superfamily. NEK Ser/Thr protein kinase family. NIMA subfamily.</text>
</comment>
<comment type="sequence caution" evidence="7">
    <conflict type="erroneous initiation">
        <sequence resource="EMBL-CDS" id="AAH24926"/>
    </conflict>
</comment>
<sequence>MSVLGEYERHCDSINSDFGSESGGGGDSGPGPSAVPGPRAGGGAAEQEELHYIPIRVLGRGAFGEATLYRRTEDDSLVVWKEVDLTRLSEKERRDALNEIVILALLQHDNIIAYYNHFMDNTTLLIELEYCNGGNLYDKILRQKDKLFEEEMVVWYLFQIVSAVSCIHKAGILHRDIKTLNIFLTKANLIKLGDYGLAKKLNSEYSMAETLVGTPYYMSPELCQGVKYNFKSDIWAVGCVIFELLTLKRTFDATNPLNLCVKIVQGIRAMEVDSSQYSLELIQLVHACLDQDPEQRPAADALLDLPLLRTRRREMEEKVTLLNAPTKRPRSSTVTEAPIAVVTSRTSEVYVWGGGKSTPQKLDVIKSGCSARQVCAGNTHFAVVTVEKELYTWVNMQGGTKLHGQLGHGDKASYRQPKHVEKLQGKAIHQVSCGDDFTVCVTDEGQLYAFGSDYYGCMGVDKVSGPEVLEPMQLNFFLSNPVEQVSCGDNHVVVLTRNKEVYSWGCGEYGRLGLDSEEDYYTPQRVDVPKALIIVAVQCGCDGTFLLTQSGKVLACGLNEFNKLGLNQCMSGIINHEAYHEVPYTTSFTLAKQLSFYKIRTIAPGKTHTAAIDERGRLLTFGCNKCGQLGVGNYKKRLGINLLGGPLGGKQVIRVSCGDEFTIAATDDNHIFAWGNGGNGRLAMTPTERPHGSDICTSWPRPIFGSLHHVPDLSCRGWHTILIVEKVLNSKTIRSNSSGLSIGTVVQSSSPGGGIGGGGGGGGGGGGEEEDSQQESETPDPSGGFRGTMEADRGMEGLISPTEAVGNSCGASSSCPGWLRKELENAEFIPMPDSPAPLSAAFSQSEKDTLPYEELQGLKVASEVPPEPQRAAGAWPPRLDPAVPCVGKALTSAACACSALQVEVDRLQALVLKCLEEQQKLQQENLQMFTQLQKLNKKLEGGQQVGMHSRGTQTAKEEMEMDPKPDLDSESWCLLGTDSCRPSL</sequence>
<accession>Q8K1R7</accession>
<accession>Q148U2</accession>
<accession>Q8R3P1</accession>
<keyword id="KW-0002">3D-structure</keyword>
<keyword id="KW-0007">Acetylation</keyword>
<keyword id="KW-0067">ATP-binding</keyword>
<keyword id="KW-0131">Cell cycle</keyword>
<keyword id="KW-0132">Cell division</keyword>
<keyword id="KW-0175">Coiled coil</keyword>
<keyword id="KW-0963">Cytoplasm</keyword>
<keyword id="KW-0418">Kinase</keyword>
<keyword id="KW-0460">Magnesium</keyword>
<keyword id="KW-0479">Metal-binding</keyword>
<keyword id="KW-0498">Mitosis</keyword>
<keyword id="KW-0547">Nucleotide-binding</keyword>
<keyword id="KW-0539">Nucleus</keyword>
<keyword id="KW-0597">Phosphoprotein</keyword>
<keyword id="KW-1185">Reference proteome</keyword>
<keyword id="KW-0677">Repeat</keyword>
<keyword id="KW-0723">Serine/threonine-protein kinase</keyword>
<keyword id="KW-0808">Transferase</keyword>
<gene>
    <name evidence="6 8" type="primary">Nek9</name>
    <name evidence="1" type="synonym">Nercc</name>
</gene>
<reference key="1">
    <citation type="submission" date="2002-06" db="EMBL/GenBank/DDBJ databases">
        <title>A novel NimA related protein kinase containing an RCC1-like domain.</title>
        <authorList>
            <person name="Joch M.R."/>
            <person name="Mandalfino C."/>
            <person name="Scime A."/>
            <person name="Whyte P."/>
        </authorList>
    </citation>
    <scope>NUCLEOTIDE SEQUENCE [MRNA]</scope>
    <source>
        <strain>BALB/cJ</strain>
        <tissue>Heart</tissue>
    </source>
</reference>
<reference key="2">
    <citation type="submission" date="2005-07" db="EMBL/GenBank/DDBJ databases">
        <authorList>
            <person name="Mural R.J."/>
            <person name="Adams M.D."/>
            <person name="Myers E.W."/>
            <person name="Smith H.O."/>
            <person name="Venter J.C."/>
        </authorList>
    </citation>
    <scope>NUCLEOTIDE SEQUENCE [LARGE SCALE GENOMIC DNA]</scope>
</reference>
<reference key="3">
    <citation type="journal article" date="2004" name="Genome Res.">
        <title>The status, quality, and expansion of the NIH full-length cDNA project: the Mammalian Gene Collection (MGC).</title>
        <authorList>
            <consortium name="The MGC Project Team"/>
        </authorList>
    </citation>
    <scope>NUCLEOTIDE SEQUENCE [LARGE SCALE MRNA]</scope>
    <source>
        <tissue>Mammary tumor</tissue>
    </source>
</reference>
<reference key="4">
    <citation type="journal article" date="2007" name="Proc. Natl. Acad. Sci. U.S.A.">
        <title>Large-scale phosphorylation analysis of mouse liver.</title>
        <authorList>
            <person name="Villen J."/>
            <person name="Beausoleil S.A."/>
            <person name="Gerber S.A."/>
            <person name="Gygi S.P."/>
        </authorList>
    </citation>
    <scope>IDENTIFICATION BY MASS SPECTROMETRY [LARGE SCALE ANALYSIS]</scope>
    <source>
        <tissue>Liver</tissue>
    </source>
</reference>
<reference key="5">
    <citation type="journal article" date="2010" name="Cell">
        <title>A tissue-specific atlas of mouse protein phosphorylation and expression.</title>
        <authorList>
            <person name="Huttlin E.L."/>
            <person name="Jedrychowski M.P."/>
            <person name="Elias J.E."/>
            <person name="Goswami T."/>
            <person name="Rad R."/>
            <person name="Beausoleil S.A."/>
            <person name="Villen J."/>
            <person name="Haas W."/>
            <person name="Sowa M.E."/>
            <person name="Gygi S.P."/>
        </authorList>
    </citation>
    <scope>PHOSPHORYLATION [LARGE SCALE ANALYSIS] AT SER-331</scope>
    <scope>IDENTIFICATION BY MASS SPECTROMETRY [LARGE SCALE ANALYSIS]</scope>
    <source>
        <tissue>Brain</tissue>
        <tissue>Brown adipose tissue</tissue>
        <tissue>Heart</tissue>
        <tissue>Kidney</tissue>
        <tissue>Liver</tissue>
        <tissue>Lung</tissue>
        <tissue>Pancreas</tissue>
        <tissue>Spleen</tissue>
        <tissue>Testis</tissue>
    </source>
</reference>
<reference evidence="9" key="6">
    <citation type="journal article" date="2015" name="Nat. Commun.">
        <title>Mechanistic basis of Nek7 activation through Nek9 binding and induced dimerization.</title>
        <authorList>
            <person name="Haq T."/>
            <person name="Richards M.W."/>
            <person name="Burgess S.G."/>
            <person name="Gallego P."/>
            <person name="Yeoh S."/>
            <person name="O'Regan L."/>
            <person name="Reverter D."/>
            <person name="Roig J."/>
            <person name="Fry A.M."/>
            <person name="Bayliss R."/>
        </authorList>
    </citation>
    <scope>X-RAY CRYSTALLOGRAPHY (2.78 ANGSTROMS) OF 817-835 IN COMPLEX WITH NEK7</scope>
</reference>
<feature type="initiator methionine" description="Removed" evidence="1">
    <location>
        <position position="1"/>
    </location>
</feature>
<feature type="chain" id="PRO_0000086436" description="Serine/threonine-protein kinase Nek9">
    <location>
        <begin position="2"/>
        <end position="984"/>
    </location>
</feature>
<feature type="domain" description="Protein kinase" evidence="3">
    <location>
        <begin position="52"/>
        <end position="308"/>
    </location>
</feature>
<feature type="repeat" description="RCC1 1">
    <location>
        <begin position="388"/>
        <end position="444"/>
    </location>
</feature>
<feature type="repeat" description="RCC1 2">
    <location>
        <begin position="445"/>
        <end position="498"/>
    </location>
</feature>
<feature type="repeat" description="RCC1 3">
    <location>
        <begin position="499"/>
        <end position="550"/>
    </location>
</feature>
<feature type="repeat" description="RCC1 4">
    <location>
        <begin position="551"/>
        <end position="615"/>
    </location>
</feature>
<feature type="repeat" description="RCC1 5">
    <location>
        <begin position="616"/>
        <end position="668"/>
    </location>
</feature>
<feature type="repeat" description="RCC1 6">
    <location>
        <begin position="669"/>
        <end position="726"/>
    </location>
</feature>
<feature type="region of interest" description="Disordered" evidence="5">
    <location>
        <begin position="14"/>
        <end position="43"/>
    </location>
</feature>
<feature type="region of interest" description="Interaction with NEK6" evidence="1">
    <location>
        <begin position="732"/>
        <end position="896"/>
    </location>
</feature>
<feature type="region of interest" description="Disordered" evidence="5">
    <location>
        <begin position="744"/>
        <end position="790"/>
    </location>
</feature>
<feature type="region of interest" description="Disordered" evidence="5">
    <location>
        <begin position="940"/>
        <end position="984"/>
    </location>
</feature>
<feature type="coiled-coil region" evidence="2">
    <location>
        <begin position="896"/>
        <end position="945"/>
    </location>
</feature>
<feature type="compositionally biased region" description="Gly residues" evidence="5">
    <location>
        <begin position="751"/>
        <end position="766"/>
    </location>
</feature>
<feature type="compositionally biased region" description="Acidic residues" evidence="5">
    <location>
        <begin position="767"/>
        <end position="778"/>
    </location>
</feature>
<feature type="compositionally biased region" description="Basic and acidic residues" evidence="5">
    <location>
        <begin position="955"/>
        <end position="967"/>
    </location>
</feature>
<feature type="active site" description="Proton acceptor" evidence="3 4">
    <location>
        <position position="176"/>
    </location>
</feature>
<feature type="binding site" evidence="3">
    <location>
        <begin position="58"/>
        <end position="66"/>
    </location>
    <ligand>
        <name>ATP</name>
        <dbReference type="ChEBI" id="CHEBI:30616"/>
    </ligand>
</feature>
<feature type="binding site" evidence="3">
    <location>
        <position position="81"/>
    </location>
    <ligand>
        <name>ATP</name>
        <dbReference type="ChEBI" id="CHEBI:30616"/>
    </ligand>
</feature>
<feature type="modified residue" description="N-acetylserine" evidence="1">
    <location>
        <position position="2"/>
    </location>
</feature>
<feature type="modified residue" description="Phosphoserine" evidence="1">
    <location>
        <position position="2"/>
    </location>
</feature>
<feature type="modified residue" description="Phosphoserine" evidence="1">
    <location>
        <position position="13"/>
    </location>
</feature>
<feature type="modified residue" description="Phosphoserine" evidence="1">
    <location>
        <position position="16"/>
    </location>
</feature>
<feature type="modified residue" description="Phosphoserine" evidence="1">
    <location>
        <position position="20"/>
    </location>
</feature>
<feature type="modified residue" description="Phosphotyrosine" evidence="1">
    <location>
        <position position="52"/>
    </location>
</feature>
<feature type="modified residue" description="Phosphoserine" evidence="1">
    <location>
        <position position="76"/>
    </location>
</feature>
<feature type="modified residue" description="Phosphothreonine; by autocatalysis" evidence="1">
    <location>
        <position position="210"/>
    </location>
</feature>
<feature type="modified residue" description="Phosphothreonine" evidence="1">
    <location>
        <position position="254"/>
    </location>
</feature>
<feature type="modified residue" description="Phosphoserine" evidence="10">
    <location>
        <position position="331"/>
    </location>
</feature>
<feature type="modified residue" description="Phosphothreonine" evidence="1">
    <location>
        <position position="333"/>
    </location>
</feature>
<feature type="modified residue" description="Phosphoserine" evidence="1">
    <location>
        <position position="741"/>
    </location>
</feature>
<feature type="modified residue" description="Phosphoserine" evidence="1">
    <location>
        <position position="808"/>
    </location>
</feature>
<feature type="modified residue" description="Phosphoserine" evidence="1">
    <location>
        <position position="839"/>
    </location>
</feature>
<feature type="modified residue" description="Phosphothreonine" evidence="1">
    <location>
        <position position="891"/>
    </location>
</feature>
<feature type="modified residue" description="Phosphoserine" evidence="1">
    <location>
        <position position="949"/>
    </location>
</feature>
<feature type="modified residue" description="Phosphoserine" evidence="1">
    <location>
        <position position="983"/>
    </location>
</feature>
<feature type="sequence conflict" description="In Ref. 1; CAD34025." evidence="7" ref="1">
    <original>F</original>
    <variation>S</variation>
    <location>
        <position position="929"/>
    </location>
</feature>
<feature type="helix" evidence="11">
    <location>
        <begin position="818"/>
        <end position="824"/>
    </location>
</feature>
<dbReference type="EC" id="2.7.11.1" evidence="1"/>
<dbReference type="EMBL" id="AJ489828">
    <property type="protein sequence ID" value="CAD34025.1"/>
    <property type="molecule type" value="mRNA"/>
</dbReference>
<dbReference type="EMBL" id="CH466590">
    <property type="protein sequence ID" value="EDL02865.1"/>
    <property type="molecule type" value="Genomic_DNA"/>
</dbReference>
<dbReference type="EMBL" id="BC024926">
    <property type="protein sequence ID" value="AAH24926.1"/>
    <property type="status" value="ALT_INIT"/>
    <property type="molecule type" value="mRNA"/>
</dbReference>
<dbReference type="EMBL" id="BC117971">
    <property type="protein sequence ID" value="AAI17972.1"/>
    <property type="molecule type" value="mRNA"/>
</dbReference>
<dbReference type="EMBL" id="BC117972">
    <property type="protein sequence ID" value="AAI17973.1"/>
    <property type="molecule type" value="mRNA"/>
</dbReference>
<dbReference type="CCDS" id="CCDS26057.1"/>
<dbReference type="RefSeq" id="NP_660120.2">
    <property type="nucleotide sequence ID" value="NM_145138.2"/>
</dbReference>
<dbReference type="PDB" id="5DE2">
    <property type="method" value="X-ray"/>
    <property type="resolution" value="2.78 A"/>
    <property type="chains" value="C/D=817-835"/>
</dbReference>
<dbReference type="PDBsum" id="5DE2"/>
<dbReference type="SMR" id="Q8K1R7"/>
<dbReference type="BioGRID" id="229954">
    <property type="interactions" value="31"/>
</dbReference>
<dbReference type="DIP" id="DIP-56880N"/>
<dbReference type="FunCoup" id="Q8K1R7">
    <property type="interactions" value="707"/>
</dbReference>
<dbReference type="IntAct" id="Q8K1R7">
    <property type="interactions" value="28"/>
</dbReference>
<dbReference type="MINT" id="Q8K1R7"/>
<dbReference type="STRING" id="10090.ENSMUSP00000049056"/>
<dbReference type="GlyGen" id="Q8K1R7">
    <property type="glycosylation" value="1 site, 1 O-linked glycan (1 site)"/>
</dbReference>
<dbReference type="iPTMnet" id="Q8K1R7"/>
<dbReference type="PhosphoSitePlus" id="Q8K1R7"/>
<dbReference type="jPOST" id="Q8K1R7"/>
<dbReference type="PaxDb" id="10090-ENSMUSP00000049056"/>
<dbReference type="ProteomicsDB" id="287368"/>
<dbReference type="Pumba" id="Q8K1R7"/>
<dbReference type="Antibodypedia" id="104">
    <property type="antibodies" value="493 antibodies from 33 providers"/>
</dbReference>
<dbReference type="DNASU" id="217718"/>
<dbReference type="Ensembl" id="ENSMUST00000040992.8">
    <property type="protein sequence ID" value="ENSMUSP00000049056.8"/>
    <property type="gene ID" value="ENSMUSG00000034290.10"/>
</dbReference>
<dbReference type="GeneID" id="217718"/>
<dbReference type="KEGG" id="mmu:217718"/>
<dbReference type="UCSC" id="uc007ogx.2">
    <property type="organism name" value="mouse"/>
</dbReference>
<dbReference type="AGR" id="MGI:2387995"/>
<dbReference type="CTD" id="91754"/>
<dbReference type="MGI" id="MGI:2387995">
    <property type="gene designation" value="Nek9"/>
</dbReference>
<dbReference type="VEuPathDB" id="HostDB:ENSMUSG00000034290"/>
<dbReference type="eggNOG" id="KOG0589">
    <property type="taxonomic scope" value="Eukaryota"/>
</dbReference>
<dbReference type="eggNOG" id="KOG1426">
    <property type="taxonomic scope" value="Eukaryota"/>
</dbReference>
<dbReference type="GeneTree" id="ENSGT00940000156145"/>
<dbReference type="HOGENOM" id="CLU_000288_123_1_1"/>
<dbReference type="InParanoid" id="Q8K1R7"/>
<dbReference type="OMA" id="MHSRGTQ"/>
<dbReference type="OrthoDB" id="8068875at2759"/>
<dbReference type="PhylomeDB" id="Q8K1R7"/>
<dbReference type="TreeFam" id="TF106472"/>
<dbReference type="Reactome" id="R-MMU-2980767">
    <property type="pathway name" value="Activation of NIMA Kinases NEK9, NEK6, NEK7"/>
</dbReference>
<dbReference type="BioGRID-ORCS" id="217718">
    <property type="hits" value="4 hits in 83 CRISPR screens"/>
</dbReference>
<dbReference type="ChiTaRS" id="Nek9">
    <property type="organism name" value="mouse"/>
</dbReference>
<dbReference type="PRO" id="PR:Q8K1R7"/>
<dbReference type="Proteomes" id="UP000000589">
    <property type="component" value="Chromosome 12"/>
</dbReference>
<dbReference type="RNAct" id="Q8K1R7">
    <property type="molecule type" value="protein"/>
</dbReference>
<dbReference type="Bgee" id="ENSMUSG00000034290">
    <property type="expression patterns" value="Expressed in metanephric mesenchyme and 243 other cell types or tissues"/>
</dbReference>
<dbReference type="GO" id="GO:0005813">
    <property type="term" value="C:centrosome"/>
    <property type="evidence" value="ECO:0007669"/>
    <property type="project" value="Ensembl"/>
</dbReference>
<dbReference type="GO" id="GO:0005737">
    <property type="term" value="C:cytoplasm"/>
    <property type="evidence" value="ECO:0007669"/>
    <property type="project" value="UniProtKB-SubCell"/>
</dbReference>
<dbReference type="GO" id="GO:0005634">
    <property type="term" value="C:nucleus"/>
    <property type="evidence" value="ECO:0007669"/>
    <property type="project" value="UniProtKB-SubCell"/>
</dbReference>
<dbReference type="GO" id="GO:0005524">
    <property type="term" value="F:ATP binding"/>
    <property type="evidence" value="ECO:0007669"/>
    <property type="project" value="UniProtKB-KW"/>
</dbReference>
<dbReference type="GO" id="GO:0046872">
    <property type="term" value="F:metal ion binding"/>
    <property type="evidence" value="ECO:0007669"/>
    <property type="project" value="UniProtKB-KW"/>
</dbReference>
<dbReference type="GO" id="GO:0030295">
    <property type="term" value="F:protein kinase activator activity"/>
    <property type="evidence" value="ECO:0000250"/>
    <property type="project" value="UniProtKB"/>
</dbReference>
<dbReference type="GO" id="GO:0019901">
    <property type="term" value="F:protein kinase binding"/>
    <property type="evidence" value="ECO:0000250"/>
    <property type="project" value="UniProtKB"/>
</dbReference>
<dbReference type="GO" id="GO:0106310">
    <property type="term" value="F:protein serine kinase activity"/>
    <property type="evidence" value="ECO:0007669"/>
    <property type="project" value="RHEA"/>
</dbReference>
<dbReference type="GO" id="GO:0004674">
    <property type="term" value="F:protein serine/threonine kinase activity"/>
    <property type="evidence" value="ECO:0000250"/>
    <property type="project" value="UniProtKB"/>
</dbReference>
<dbReference type="GO" id="GO:0051301">
    <property type="term" value="P:cell division"/>
    <property type="evidence" value="ECO:0007669"/>
    <property type="project" value="UniProtKB-KW"/>
</dbReference>
<dbReference type="GO" id="GO:0000278">
    <property type="term" value="P:mitotic cell cycle"/>
    <property type="evidence" value="ECO:0000250"/>
    <property type="project" value="UniProtKB"/>
</dbReference>
<dbReference type="GO" id="GO:0007346">
    <property type="term" value="P:regulation of mitotic cell cycle"/>
    <property type="evidence" value="ECO:0007669"/>
    <property type="project" value="Ensembl"/>
</dbReference>
<dbReference type="CDD" id="cd08221">
    <property type="entry name" value="STKc_Nek9"/>
    <property type="match status" value="1"/>
</dbReference>
<dbReference type="FunFam" id="1.10.510.10:FF:000602">
    <property type="entry name" value="serine/threonine-protein kinase Nek9"/>
    <property type="match status" value="1"/>
</dbReference>
<dbReference type="FunFam" id="2.130.10.30:FF:000021">
    <property type="entry name" value="serine/threonine-protein kinase Nek9 isoform X2"/>
    <property type="match status" value="1"/>
</dbReference>
<dbReference type="FunFam" id="2.130.10.30:FF:000023">
    <property type="entry name" value="serine/threonine-protein kinase Nek9 isoform X2"/>
    <property type="match status" value="1"/>
</dbReference>
<dbReference type="FunFam" id="3.30.200.20:FF:000398">
    <property type="entry name" value="serine/threonine-protein kinase Nek9 isoform X2"/>
    <property type="match status" value="1"/>
</dbReference>
<dbReference type="Gene3D" id="3.30.200.20">
    <property type="entry name" value="Phosphorylase Kinase, domain 1"/>
    <property type="match status" value="1"/>
</dbReference>
<dbReference type="Gene3D" id="2.130.10.30">
    <property type="entry name" value="Regulator of chromosome condensation 1/beta-lactamase-inhibitor protein II"/>
    <property type="match status" value="2"/>
</dbReference>
<dbReference type="Gene3D" id="1.10.510.10">
    <property type="entry name" value="Transferase(Phosphotransferase) domain 1"/>
    <property type="match status" value="1"/>
</dbReference>
<dbReference type="InterPro" id="IPR011009">
    <property type="entry name" value="Kinase-like_dom_sf"/>
</dbReference>
<dbReference type="InterPro" id="IPR042767">
    <property type="entry name" value="Nek9_STKc"/>
</dbReference>
<dbReference type="InterPro" id="IPR000719">
    <property type="entry name" value="Prot_kinase_dom"/>
</dbReference>
<dbReference type="InterPro" id="IPR009091">
    <property type="entry name" value="RCC1/BLIP-II"/>
</dbReference>
<dbReference type="InterPro" id="IPR000408">
    <property type="entry name" value="Reg_chr_condens"/>
</dbReference>
<dbReference type="InterPro" id="IPR008271">
    <property type="entry name" value="Ser/Thr_kinase_AS"/>
</dbReference>
<dbReference type="InterPro" id="IPR051997">
    <property type="entry name" value="STK_NEK"/>
</dbReference>
<dbReference type="PANTHER" id="PTHR44535">
    <property type="entry name" value="PROTEIN CBG16200"/>
    <property type="match status" value="1"/>
</dbReference>
<dbReference type="PANTHER" id="PTHR44535:SF1">
    <property type="entry name" value="SERINE_THREONINE-PROTEIN KINASE NEK9"/>
    <property type="match status" value="1"/>
</dbReference>
<dbReference type="Pfam" id="PF00069">
    <property type="entry name" value="Pkinase"/>
    <property type="match status" value="1"/>
</dbReference>
<dbReference type="Pfam" id="PF25390">
    <property type="entry name" value="WD40_RLD"/>
    <property type="match status" value="1"/>
</dbReference>
<dbReference type="SMART" id="SM00220">
    <property type="entry name" value="S_TKc"/>
    <property type="match status" value="1"/>
</dbReference>
<dbReference type="SUPFAM" id="SSF56112">
    <property type="entry name" value="Protein kinase-like (PK-like)"/>
    <property type="match status" value="1"/>
</dbReference>
<dbReference type="SUPFAM" id="SSF50985">
    <property type="entry name" value="RCC1/BLIP-II"/>
    <property type="match status" value="1"/>
</dbReference>
<dbReference type="PROSITE" id="PS50011">
    <property type="entry name" value="PROTEIN_KINASE_DOM"/>
    <property type="match status" value="1"/>
</dbReference>
<dbReference type="PROSITE" id="PS00108">
    <property type="entry name" value="PROTEIN_KINASE_ST"/>
    <property type="match status" value="1"/>
</dbReference>
<dbReference type="PROSITE" id="PS50012">
    <property type="entry name" value="RCC1_3"/>
    <property type="match status" value="6"/>
</dbReference>
<name>NEK9_MOUSE</name>
<evidence type="ECO:0000250" key="1">
    <source>
        <dbReference type="UniProtKB" id="Q8TD19"/>
    </source>
</evidence>
<evidence type="ECO:0000255" key="2"/>
<evidence type="ECO:0000255" key="3">
    <source>
        <dbReference type="PROSITE-ProRule" id="PRU00159"/>
    </source>
</evidence>
<evidence type="ECO:0000255" key="4">
    <source>
        <dbReference type="PROSITE-ProRule" id="PRU10027"/>
    </source>
</evidence>
<evidence type="ECO:0000256" key="5">
    <source>
        <dbReference type="SAM" id="MobiDB-lite"/>
    </source>
</evidence>
<evidence type="ECO:0000303" key="6">
    <source>
    </source>
</evidence>
<evidence type="ECO:0000305" key="7"/>
<evidence type="ECO:0000312" key="8">
    <source>
        <dbReference type="MGI" id="MGI:2387995"/>
    </source>
</evidence>
<evidence type="ECO:0007744" key="9">
    <source>
        <dbReference type="PDB" id="5DE2"/>
    </source>
</evidence>
<evidence type="ECO:0007744" key="10">
    <source>
    </source>
</evidence>
<evidence type="ECO:0007829" key="11">
    <source>
        <dbReference type="PDB" id="5DE2"/>
    </source>
</evidence>
<organism>
    <name type="scientific">Mus musculus</name>
    <name type="common">Mouse</name>
    <dbReference type="NCBI Taxonomy" id="10090"/>
    <lineage>
        <taxon>Eukaryota</taxon>
        <taxon>Metazoa</taxon>
        <taxon>Chordata</taxon>
        <taxon>Craniata</taxon>
        <taxon>Vertebrata</taxon>
        <taxon>Euteleostomi</taxon>
        <taxon>Mammalia</taxon>
        <taxon>Eutheria</taxon>
        <taxon>Euarchontoglires</taxon>
        <taxon>Glires</taxon>
        <taxon>Rodentia</taxon>
        <taxon>Myomorpha</taxon>
        <taxon>Muroidea</taxon>
        <taxon>Muridae</taxon>
        <taxon>Murinae</taxon>
        <taxon>Mus</taxon>
        <taxon>Mus</taxon>
    </lineage>
</organism>